<organism>
    <name type="scientific">Streptomyces avermitilis (strain ATCC 31267 / DSM 46492 / JCM 5070 / NBRC 14893 / NCIMB 12804 / NRRL 8165 / MA-4680)</name>
    <dbReference type="NCBI Taxonomy" id="227882"/>
    <lineage>
        <taxon>Bacteria</taxon>
        <taxon>Bacillati</taxon>
        <taxon>Actinomycetota</taxon>
        <taxon>Actinomycetes</taxon>
        <taxon>Kitasatosporales</taxon>
        <taxon>Streptomycetaceae</taxon>
        <taxon>Streptomyces</taxon>
    </lineage>
</organism>
<sequence>MAEQTHVLFVEDDDVIREATQLALERDGFAVTAMPDGLSGLEAFRANRPDIALLDVMVPGLDGVSLCRRIRDESTVPVIMLSARADSIDVVLGLEAGADDYVTKPFDGAVLVARIRAVLRRFGHASGPNSRPAEDSSAPDGGVLTFGELEIDTEGMEVRRSGQPVALTPTEMRLLLEFSSAPGTVLSRDKLLERVWDYGWGGDTRVVDVHVQRLRTKIGQDRIDTVRGFGYKLKA</sequence>
<name>CSEB_STRAW</name>
<feature type="chain" id="PRO_0000314480" description="Transcriptional regulatory protein CseB">
    <location>
        <begin position="1"/>
        <end position="235"/>
    </location>
</feature>
<feature type="domain" description="Response regulatory" evidence="2">
    <location>
        <begin position="6"/>
        <end position="119"/>
    </location>
</feature>
<feature type="DNA-binding region" description="OmpR/PhoB-type" evidence="3">
    <location>
        <begin position="141"/>
        <end position="235"/>
    </location>
</feature>
<feature type="modified residue" description="4-aspartylphosphate" evidence="2">
    <location>
        <position position="55"/>
    </location>
</feature>
<keyword id="KW-0963">Cytoplasm</keyword>
<keyword id="KW-0238">DNA-binding</keyword>
<keyword id="KW-0597">Phosphoprotein</keyword>
<keyword id="KW-1185">Reference proteome</keyword>
<keyword id="KW-0804">Transcription</keyword>
<keyword id="KW-0805">Transcription regulation</keyword>
<keyword id="KW-0902">Two-component regulatory system</keyword>
<dbReference type="EMBL" id="BA000030">
    <property type="protein sequence ID" value="BAC72416.1"/>
    <property type="molecule type" value="Genomic_DNA"/>
</dbReference>
<dbReference type="RefSeq" id="WP_010986128.1">
    <property type="nucleotide sequence ID" value="NZ_JZJK01000054.1"/>
</dbReference>
<dbReference type="SMR" id="Q82EB1"/>
<dbReference type="GeneID" id="41541784"/>
<dbReference type="KEGG" id="sma:SAVERM_4704"/>
<dbReference type="eggNOG" id="COG0745">
    <property type="taxonomic scope" value="Bacteria"/>
</dbReference>
<dbReference type="HOGENOM" id="CLU_000445_30_4_11"/>
<dbReference type="OrthoDB" id="3197131at2"/>
<dbReference type="Proteomes" id="UP000000428">
    <property type="component" value="Chromosome"/>
</dbReference>
<dbReference type="GO" id="GO:0005829">
    <property type="term" value="C:cytosol"/>
    <property type="evidence" value="ECO:0007669"/>
    <property type="project" value="TreeGrafter"/>
</dbReference>
<dbReference type="GO" id="GO:0032993">
    <property type="term" value="C:protein-DNA complex"/>
    <property type="evidence" value="ECO:0007669"/>
    <property type="project" value="TreeGrafter"/>
</dbReference>
<dbReference type="GO" id="GO:0000156">
    <property type="term" value="F:phosphorelay response regulator activity"/>
    <property type="evidence" value="ECO:0007669"/>
    <property type="project" value="TreeGrafter"/>
</dbReference>
<dbReference type="GO" id="GO:0000976">
    <property type="term" value="F:transcription cis-regulatory region binding"/>
    <property type="evidence" value="ECO:0007669"/>
    <property type="project" value="TreeGrafter"/>
</dbReference>
<dbReference type="GO" id="GO:0006355">
    <property type="term" value="P:regulation of DNA-templated transcription"/>
    <property type="evidence" value="ECO:0007669"/>
    <property type="project" value="InterPro"/>
</dbReference>
<dbReference type="CDD" id="cd17574">
    <property type="entry name" value="REC_OmpR"/>
    <property type="match status" value="1"/>
</dbReference>
<dbReference type="CDD" id="cd00383">
    <property type="entry name" value="trans_reg_C"/>
    <property type="match status" value="1"/>
</dbReference>
<dbReference type="FunFam" id="1.10.10.10:FF:000018">
    <property type="entry name" value="DNA-binding response regulator ResD"/>
    <property type="match status" value="1"/>
</dbReference>
<dbReference type="FunFam" id="3.40.50.2300:FF:000115">
    <property type="entry name" value="Two-component system response regulator"/>
    <property type="match status" value="1"/>
</dbReference>
<dbReference type="Gene3D" id="3.40.50.2300">
    <property type="match status" value="1"/>
</dbReference>
<dbReference type="Gene3D" id="6.10.250.690">
    <property type="match status" value="1"/>
</dbReference>
<dbReference type="Gene3D" id="1.10.10.10">
    <property type="entry name" value="Winged helix-like DNA-binding domain superfamily/Winged helix DNA-binding domain"/>
    <property type="match status" value="1"/>
</dbReference>
<dbReference type="InterPro" id="IPR011006">
    <property type="entry name" value="CheY-like_superfamily"/>
</dbReference>
<dbReference type="InterPro" id="IPR049766">
    <property type="entry name" value="CseB"/>
</dbReference>
<dbReference type="InterPro" id="IPR001867">
    <property type="entry name" value="OmpR/PhoB-type_DNA-bd"/>
</dbReference>
<dbReference type="InterPro" id="IPR016032">
    <property type="entry name" value="Sig_transdc_resp-reg_C-effctor"/>
</dbReference>
<dbReference type="InterPro" id="IPR001789">
    <property type="entry name" value="Sig_transdc_resp-reg_receiver"/>
</dbReference>
<dbReference type="InterPro" id="IPR039420">
    <property type="entry name" value="WalR-like"/>
</dbReference>
<dbReference type="InterPro" id="IPR036388">
    <property type="entry name" value="WH-like_DNA-bd_sf"/>
</dbReference>
<dbReference type="NCBIfam" id="NF041733">
    <property type="entry name" value="resp_reg_CseB"/>
    <property type="match status" value="1"/>
</dbReference>
<dbReference type="PANTHER" id="PTHR48111:SF21">
    <property type="entry name" value="DNA-BINDING DUAL MASTER TRANSCRIPTIONAL REGULATOR RPAA"/>
    <property type="match status" value="1"/>
</dbReference>
<dbReference type="PANTHER" id="PTHR48111">
    <property type="entry name" value="REGULATOR OF RPOS"/>
    <property type="match status" value="1"/>
</dbReference>
<dbReference type="Pfam" id="PF00072">
    <property type="entry name" value="Response_reg"/>
    <property type="match status" value="1"/>
</dbReference>
<dbReference type="Pfam" id="PF00486">
    <property type="entry name" value="Trans_reg_C"/>
    <property type="match status" value="1"/>
</dbReference>
<dbReference type="SMART" id="SM00448">
    <property type="entry name" value="REC"/>
    <property type="match status" value="1"/>
</dbReference>
<dbReference type="SMART" id="SM00862">
    <property type="entry name" value="Trans_reg_C"/>
    <property type="match status" value="1"/>
</dbReference>
<dbReference type="SUPFAM" id="SSF46894">
    <property type="entry name" value="C-terminal effector domain of the bipartite response regulators"/>
    <property type="match status" value="1"/>
</dbReference>
<dbReference type="SUPFAM" id="SSF52172">
    <property type="entry name" value="CheY-like"/>
    <property type="match status" value="1"/>
</dbReference>
<dbReference type="PROSITE" id="PS51755">
    <property type="entry name" value="OMPR_PHOB"/>
    <property type="match status" value="1"/>
</dbReference>
<dbReference type="PROSITE" id="PS50110">
    <property type="entry name" value="RESPONSE_REGULATORY"/>
    <property type="match status" value="1"/>
</dbReference>
<protein>
    <recommendedName>
        <fullName>Transcriptional regulatory protein CseB</fullName>
    </recommendedName>
</protein>
<evidence type="ECO:0000250" key="1"/>
<evidence type="ECO:0000255" key="2">
    <source>
        <dbReference type="PROSITE-ProRule" id="PRU00169"/>
    </source>
</evidence>
<evidence type="ECO:0000255" key="3">
    <source>
        <dbReference type="PROSITE-ProRule" id="PRU01091"/>
    </source>
</evidence>
<gene>
    <name type="primary">cseB</name>
    <name type="ordered locus">SAV_4704</name>
</gene>
<accession>Q82EB1</accession>
<proteinExistence type="inferred from homology"/>
<comment type="function">
    <text evidence="1">Member of the two-component regulatory system CseB/CseC involved in the stability of the cell envelope. CseB activates transcription of RNA polymerase sigma-E factor, in response to changes in the cell envelope (By similarity).</text>
</comment>
<comment type="subcellular location">
    <subcellularLocation>
        <location evidence="1">Cytoplasm</location>
    </subcellularLocation>
</comment>
<comment type="PTM">
    <text evidence="1">Phosphorylated by CseC.</text>
</comment>
<reference key="1">
    <citation type="journal article" date="2001" name="Proc. Natl. Acad. Sci. U.S.A.">
        <title>Genome sequence of an industrial microorganism Streptomyces avermitilis: deducing the ability of producing secondary metabolites.</title>
        <authorList>
            <person name="Omura S."/>
            <person name="Ikeda H."/>
            <person name="Ishikawa J."/>
            <person name="Hanamoto A."/>
            <person name="Takahashi C."/>
            <person name="Shinose M."/>
            <person name="Takahashi Y."/>
            <person name="Horikawa H."/>
            <person name="Nakazawa H."/>
            <person name="Osonoe T."/>
            <person name="Kikuchi H."/>
            <person name="Shiba T."/>
            <person name="Sakaki Y."/>
            <person name="Hattori M."/>
        </authorList>
    </citation>
    <scope>NUCLEOTIDE SEQUENCE [LARGE SCALE GENOMIC DNA]</scope>
    <source>
        <strain>ATCC 31267 / DSM 46492 / JCM 5070 / NBRC 14893 / NCIMB 12804 / NRRL 8165 / MA-4680</strain>
    </source>
</reference>
<reference key="2">
    <citation type="journal article" date="2003" name="Nat. Biotechnol.">
        <title>Complete genome sequence and comparative analysis of the industrial microorganism Streptomyces avermitilis.</title>
        <authorList>
            <person name="Ikeda H."/>
            <person name="Ishikawa J."/>
            <person name="Hanamoto A."/>
            <person name="Shinose M."/>
            <person name="Kikuchi H."/>
            <person name="Shiba T."/>
            <person name="Sakaki Y."/>
            <person name="Hattori M."/>
            <person name="Omura S."/>
        </authorList>
    </citation>
    <scope>NUCLEOTIDE SEQUENCE [LARGE SCALE GENOMIC DNA]</scope>
    <source>
        <strain>ATCC 31267 / DSM 46492 / JCM 5070 / NBRC 14893 / NCIMB 12804 / NRRL 8165 / MA-4680</strain>
    </source>
</reference>